<name>SYH_STAA2</name>
<keyword id="KW-0030">Aminoacyl-tRNA synthetase</keyword>
<keyword id="KW-0067">ATP-binding</keyword>
<keyword id="KW-0963">Cytoplasm</keyword>
<keyword id="KW-0436">Ligase</keyword>
<keyword id="KW-0547">Nucleotide-binding</keyword>
<keyword id="KW-0648">Protein biosynthesis</keyword>
<dbReference type="EC" id="6.1.1.21" evidence="1"/>
<dbReference type="EMBL" id="CP000736">
    <property type="protein sequence ID" value="ABR52567.1"/>
    <property type="molecule type" value="Genomic_DNA"/>
</dbReference>
<dbReference type="SMR" id="A6U299"/>
<dbReference type="KEGG" id="sah:SaurJH1_1721"/>
<dbReference type="HOGENOM" id="CLU_025113_1_1_9"/>
<dbReference type="GO" id="GO:0005737">
    <property type="term" value="C:cytoplasm"/>
    <property type="evidence" value="ECO:0007669"/>
    <property type="project" value="UniProtKB-SubCell"/>
</dbReference>
<dbReference type="GO" id="GO:0005524">
    <property type="term" value="F:ATP binding"/>
    <property type="evidence" value="ECO:0007669"/>
    <property type="project" value="UniProtKB-UniRule"/>
</dbReference>
<dbReference type="GO" id="GO:0140096">
    <property type="term" value="F:catalytic activity, acting on a protein"/>
    <property type="evidence" value="ECO:0007669"/>
    <property type="project" value="UniProtKB-ARBA"/>
</dbReference>
<dbReference type="GO" id="GO:0004821">
    <property type="term" value="F:histidine-tRNA ligase activity"/>
    <property type="evidence" value="ECO:0007669"/>
    <property type="project" value="UniProtKB-UniRule"/>
</dbReference>
<dbReference type="GO" id="GO:0016740">
    <property type="term" value="F:transferase activity"/>
    <property type="evidence" value="ECO:0007669"/>
    <property type="project" value="UniProtKB-ARBA"/>
</dbReference>
<dbReference type="GO" id="GO:0006427">
    <property type="term" value="P:histidyl-tRNA aminoacylation"/>
    <property type="evidence" value="ECO:0007669"/>
    <property type="project" value="UniProtKB-UniRule"/>
</dbReference>
<dbReference type="CDD" id="cd00738">
    <property type="entry name" value="HGTP_anticodon"/>
    <property type="match status" value="1"/>
</dbReference>
<dbReference type="CDD" id="cd00773">
    <property type="entry name" value="HisRS-like_core"/>
    <property type="match status" value="1"/>
</dbReference>
<dbReference type="FunFam" id="3.30.930.10:FF:000005">
    <property type="entry name" value="Histidine--tRNA ligase"/>
    <property type="match status" value="1"/>
</dbReference>
<dbReference type="Gene3D" id="3.40.50.800">
    <property type="entry name" value="Anticodon-binding domain"/>
    <property type="match status" value="1"/>
</dbReference>
<dbReference type="Gene3D" id="3.30.930.10">
    <property type="entry name" value="Bira Bifunctional Protein, Domain 2"/>
    <property type="match status" value="1"/>
</dbReference>
<dbReference type="HAMAP" id="MF_00127">
    <property type="entry name" value="His_tRNA_synth"/>
    <property type="match status" value="1"/>
</dbReference>
<dbReference type="InterPro" id="IPR006195">
    <property type="entry name" value="aa-tRNA-synth_II"/>
</dbReference>
<dbReference type="InterPro" id="IPR045864">
    <property type="entry name" value="aa-tRNA-synth_II/BPL/LPL"/>
</dbReference>
<dbReference type="InterPro" id="IPR004154">
    <property type="entry name" value="Anticodon-bd"/>
</dbReference>
<dbReference type="InterPro" id="IPR036621">
    <property type="entry name" value="Anticodon-bd_dom_sf"/>
</dbReference>
<dbReference type="InterPro" id="IPR015807">
    <property type="entry name" value="His-tRNA-ligase"/>
</dbReference>
<dbReference type="InterPro" id="IPR041715">
    <property type="entry name" value="HisRS-like_core"/>
</dbReference>
<dbReference type="InterPro" id="IPR004516">
    <property type="entry name" value="HisRS/HisZ"/>
</dbReference>
<dbReference type="NCBIfam" id="TIGR00442">
    <property type="entry name" value="hisS"/>
    <property type="match status" value="1"/>
</dbReference>
<dbReference type="PANTHER" id="PTHR43707:SF1">
    <property type="entry name" value="HISTIDINE--TRNA LIGASE, MITOCHONDRIAL-RELATED"/>
    <property type="match status" value="1"/>
</dbReference>
<dbReference type="PANTHER" id="PTHR43707">
    <property type="entry name" value="HISTIDYL-TRNA SYNTHETASE"/>
    <property type="match status" value="1"/>
</dbReference>
<dbReference type="Pfam" id="PF03129">
    <property type="entry name" value="HGTP_anticodon"/>
    <property type="match status" value="1"/>
</dbReference>
<dbReference type="Pfam" id="PF13393">
    <property type="entry name" value="tRNA-synt_His"/>
    <property type="match status" value="1"/>
</dbReference>
<dbReference type="PIRSF" id="PIRSF001549">
    <property type="entry name" value="His-tRNA_synth"/>
    <property type="match status" value="1"/>
</dbReference>
<dbReference type="SUPFAM" id="SSF52954">
    <property type="entry name" value="Class II aaRS ABD-related"/>
    <property type="match status" value="1"/>
</dbReference>
<dbReference type="SUPFAM" id="SSF55681">
    <property type="entry name" value="Class II aaRS and biotin synthetases"/>
    <property type="match status" value="1"/>
</dbReference>
<dbReference type="PROSITE" id="PS50862">
    <property type="entry name" value="AA_TRNA_LIGASE_II"/>
    <property type="match status" value="1"/>
</dbReference>
<gene>
    <name evidence="1" type="primary">hisS</name>
    <name type="ordered locus">SaurJH1_1721</name>
</gene>
<proteinExistence type="inferred from homology"/>
<sequence>MIKIPRGTQDILPEDSKKWRYIENQLDELMTFYNYKEIRTPIFESTDLFARGVGDSTDVVQKEMYTFKDKGDRSITLRPEGTAAVVRSYIEHKMQGNPNQPIKLYYNGPMFRYERKQKGRYRQFNQFGVEAIGAENPSVDAEVLAMVMHIYQSFGLKHLKLVINSVGDMASRKEYNEALVKHFEPVIHEFCSDCQSRLHTNPMRILDCKVDRDKEAIKTAPRITDFLNEESKAYYEQVKAYLDDLGIPYIEDPNLVRGLDYYTHTAFELMMDNPNYDGAITTLCGGGRYNGLLELLDGPSETGIGFALSIERLLLALEEEGIELDIEENLDLFIVTMGDQADRYAVKLLNHLRHNGIKADKDYLQRKIKGQMKQADRLGAKFTIVIGDQELENNKIDVKNMTTGESETIELDALVEYFKK</sequence>
<organism>
    <name type="scientific">Staphylococcus aureus (strain JH1)</name>
    <dbReference type="NCBI Taxonomy" id="359787"/>
    <lineage>
        <taxon>Bacteria</taxon>
        <taxon>Bacillati</taxon>
        <taxon>Bacillota</taxon>
        <taxon>Bacilli</taxon>
        <taxon>Bacillales</taxon>
        <taxon>Staphylococcaceae</taxon>
        <taxon>Staphylococcus</taxon>
    </lineage>
</organism>
<protein>
    <recommendedName>
        <fullName evidence="1">Histidine--tRNA ligase</fullName>
        <ecNumber evidence="1">6.1.1.21</ecNumber>
    </recommendedName>
    <alternativeName>
        <fullName evidence="1">Histidyl-tRNA synthetase</fullName>
        <shortName evidence="1">HisRS</shortName>
    </alternativeName>
</protein>
<feature type="chain" id="PRO_1000076290" description="Histidine--tRNA ligase">
    <location>
        <begin position="1"/>
        <end position="420"/>
    </location>
</feature>
<evidence type="ECO:0000255" key="1">
    <source>
        <dbReference type="HAMAP-Rule" id="MF_00127"/>
    </source>
</evidence>
<reference key="1">
    <citation type="submission" date="2007-06" db="EMBL/GenBank/DDBJ databases">
        <title>Complete sequence of chromosome of Staphylococcus aureus subsp. aureus JH1.</title>
        <authorList>
            <consortium name="US DOE Joint Genome Institute"/>
            <person name="Copeland A."/>
            <person name="Lucas S."/>
            <person name="Lapidus A."/>
            <person name="Barry K."/>
            <person name="Detter J.C."/>
            <person name="Glavina del Rio T."/>
            <person name="Hammon N."/>
            <person name="Israni S."/>
            <person name="Dalin E."/>
            <person name="Tice H."/>
            <person name="Pitluck S."/>
            <person name="Chain P."/>
            <person name="Malfatti S."/>
            <person name="Shin M."/>
            <person name="Vergez L."/>
            <person name="Schmutz J."/>
            <person name="Larimer F."/>
            <person name="Land M."/>
            <person name="Hauser L."/>
            <person name="Kyrpides N."/>
            <person name="Ivanova N."/>
            <person name="Tomasz A."/>
            <person name="Richardson P."/>
        </authorList>
    </citation>
    <scope>NUCLEOTIDE SEQUENCE [LARGE SCALE GENOMIC DNA]</scope>
    <source>
        <strain>JH1</strain>
    </source>
</reference>
<accession>A6U299</accession>
<comment type="catalytic activity">
    <reaction evidence="1">
        <text>tRNA(His) + L-histidine + ATP = L-histidyl-tRNA(His) + AMP + diphosphate + H(+)</text>
        <dbReference type="Rhea" id="RHEA:17313"/>
        <dbReference type="Rhea" id="RHEA-COMP:9665"/>
        <dbReference type="Rhea" id="RHEA-COMP:9689"/>
        <dbReference type="ChEBI" id="CHEBI:15378"/>
        <dbReference type="ChEBI" id="CHEBI:30616"/>
        <dbReference type="ChEBI" id="CHEBI:33019"/>
        <dbReference type="ChEBI" id="CHEBI:57595"/>
        <dbReference type="ChEBI" id="CHEBI:78442"/>
        <dbReference type="ChEBI" id="CHEBI:78527"/>
        <dbReference type="ChEBI" id="CHEBI:456215"/>
        <dbReference type="EC" id="6.1.1.21"/>
    </reaction>
</comment>
<comment type="subunit">
    <text evidence="1">Homodimer.</text>
</comment>
<comment type="subcellular location">
    <subcellularLocation>
        <location evidence="1">Cytoplasm</location>
    </subcellularLocation>
</comment>
<comment type="similarity">
    <text evidence="1">Belongs to the class-II aminoacyl-tRNA synthetase family.</text>
</comment>